<gene>
    <name type="primary">Emp2</name>
</gene>
<keyword id="KW-1003">Cell membrane</keyword>
<keyword id="KW-0963">Cytoplasm</keyword>
<keyword id="KW-0333">Golgi apparatus</keyword>
<keyword id="KW-0472">Membrane</keyword>
<keyword id="KW-0539">Nucleus</keyword>
<keyword id="KW-1185">Reference proteome</keyword>
<keyword id="KW-0812">Transmembrane</keyword>
<keyword id="KW-1133">Transmembrane helix</keyword>
<evidence type="ECO:0000250" key="1">
    <source>
        <dbReference type="UniProtKB" id="F1QIK8"/>
    </source>
</evidence>
<evidence type="ECO:0000250" key="2">
    <source>
        <dbReference type="UniProtKB" id="O88662"/>
    </source>
</evidence>
<evidence type="ECO:0000250" key="3">
    <source>
        <dbReference type="UniProtKB" id="P54851"/>
    </source>
</evidence>
<evidence type="ECO:0000255" key="4"/>
<evidence type="ECO:0000269" key="5">
    <source>
    </source>
</evidence>
<evidence type="ECO:0000305" key="6"/>
<evidence type="ECO:0000312" key="7">
    <source>
        <dbReference type="EMBL" id="AAH81865.1"/>
    </source>
</evidence>
<proteinExistence type="evidence at transcript level"/>
<comment type="function">
    <text evidence="1 2 3">Functions as a key regulator of cell membrane composition by regulating protein surface expression. Also, plays a role in regulation of processes including cell migration, cell proliferation, cell contraction and cell adhesion. Regulates transepithelial migration of neutrophils into the alveolar lumen, potentially via mediation of cell surface expression of adhesion markers and lipid raft formation (By similarity). Negatively regulates caveolae formation by reducing CAV1 expression and CAV1 amount by increasing lysosomal degradation (By similarity). Facilitates surface trafficking and the formation of lipid rafts bearing GPI-anchor proteins (By similarity). Regulates surface expression of MHC1 and ICAM1 proteins increasing susceptibility to T-cell mediated cytotoxicity (By similarity). Regulates the plasma membrane expression of the integrin heterodimers ITGA6-ITGB1, ITGA5-ITGB3 and ITGA5-ITGB1 resulting in modulation of cell-matrix adhesion (By similarity). Also regulates many processes through PTK2 (By similarity). Regulates blood vessel endothelial cell migration and angiogenesis by regulating VEGF protein expression through PTK2 activation (By similarity). Regulates cell migration and cell contraction through PTK2 and SRC activation (By similarity). Regulates focal adhesion density, F-actin conformation and cell adhesion capacity through interaction with PTK2 (By similarity). Positively regulates cell proliferation (By similarity). Plays a role during cell death and cell blebbing. Promotes angiogenesis and vasculogenesis through induction of VEGFA via a HIF1A-dependent pathway (By similarity). Also plays a role in embryo implantation by regulating surface trafficking of integrin heterodimer ITGA5-ITGB3 (By similarity). Plays a role in placental angiogenesis and uterine natural killer cell regulation at the maternal-fetal placental interface, however not required in the maternal tissues for a viable pregnancy (By similarity). Involved in the early stages of embryogenic development and cardiogenesis, potentially via regulation of epithelial-mesenchymal transition timing (By similarity). May play a role in glomerular filtration (By similarity).</text>
</comment>
<comment type="subunit">
    <text evidence="2 3">Interacts with PTK2; regulates PTK2 activation and localization (By similarity). Interacts with ITGB3; regulates the levels of the heterodimer ITGA5-ITGB3 integrin surface expression (By similarity). Interacts with P2RX7 (via C-terminus) (By similarity). Interacts with ITGB1; the interaction may be direct or indirect and ITGB1 has a heterodimer form (By similarity).</text>
</comment>
<comment type="subcellular location">
    <subcellularLocation>
        <location evidence="2">Golgi apparatus membrane</location>
        <topology evidence="4">Multi-pass membrane protein</topology>
    </subcellularLocation>
    <subcellularLocation>
        <location evidence="2 3">Cell membrane</location>
    </subcellularLocation>
    <subcellularLocation>
        <location evidence="2">Apical cell membrane</location>
    </subcellularLocation>
    <subcellularLocation>
        <location evidence="2 3">Membrane raft</location>
    </subcellularLocation>
    <subcellularLocation>
        <location evidence="2 3 5">Cytoplasm</location>
    </subcellularLocation>
    <subcellularLocation>
        <location evidence="5">Nucleus</location>
    </subcellularLocation>
    <subcellularLocation>
        <location evidence="2">Cytoplasm</location>
        <location evidence="2">Perinuclear region</location>
    </subcellularLocation>
    <text evidence="2 5">Localizes in cytoplasm, foot processes and cell bodies of podocytes and nucleus of endothelial cells of kidney (PubMed:24814193). Localizes to the apical cell surface in the luminal epithelium and glandular epithelium. Colocalized with ITGB1 and GPI-anchor proteins on plasma membrane (By similarity).</text>
</comment>
<comment type="tissue specificity">
    <text evidence="5">Expressed in glomeruli.</text>
</comment>
<comment type="similarity">
    <text evidence="6">Belongs to the PMP-22/EMP/MP20 family.</text>
</comment>
<sequence>MLVILAFIIVFHIVSTALLFISTIDNAWWVGDGFSADIWRVCTNSTNCTEINDLSSTEEFSGYSVMQAVQATMILSTILSCISFLIFLLQLFRLKQGERFVLTAIIQLMSCLCVMIGASVYTDRRQDLHHQNSQLYYLLQEGSYGYSFILAWVAFAFTFISGLMYMILRKRK</sequence>
<protein>
    <recommendedName>
        <fullName>Epithelial membrane protein 2</fullName>
        <shortName>EMP-2</shortName>
    </recommendedName>
</protein>
<dbReference type="EMBL" id="AABR06062648">
    <property type="status" value="NOT_ANNOTATED_CDS"/>
    <property type="molecule type" value="Genomic_DNA"/>
</dbReference>
<dbReference type="EMBL" id="AABR06062649">
    <property type="status" value="NOT_ANNOTATED_CDS"/>
    <property type="molecule type" value="Genomic_DNA"/>
</dbReference>
<dbReference type="EMBL" id="AABR06062650">
    <property type="status" value="NOT_ANNOTATED_CDS"/>
    <property type="molecule type" value="Genomic_DNA"/>
</dbReference>
<dbReference type="EMBL" id="AABR06062651">
    <property type="status" value="NOT_ANNOTATED_CDS"/>
    <property type="molecule type" value="Genomic_DNA"/>
</dbReference>
<dbReference type="EMBL" id="AABR06062652">
    <property type="status" value="NOT_ANNOTATED_CDS"/>
    <property type="molecule type" value="Genomic_DNA"/>
</dbReference>
<dbReference type="EMBL" id="CH474017">
    <property type="protein sequence ID" value="EDL96228.1"/>
    <property type="molecule type" value="Genomic_DNA"/>
</dbReference>
<dbReference type="EMBL" id="BC081865">
    <property type="protein sequence ID" value="AAH81865.1"/>
    <property type="molecule type" value="mRNA"/>
</dbReference>
<dbReference type="RefSeq" id="NP_001007722.1">
    <property type="nucleotide sequence ID" value="NM_001007721.1"/>
</dbReference>
<dbReference type="SMR" id="Q66HH2"/>
<dbReference type="FunCoup" id="Q66HH2">
    <property type="interactions" value="334"/>
</dbReference>
<dbReference type="STRING" id="10116.ENSRNOP00000003615"/>
<dbReference type="PhosphoSitePlus" id="Q66HH2"/>
<dbReference type="PaxDb" id="10116-ENSRNOP00000003615"/>
<dbReference type="Ensembl" id="ENSRNOT00000003615.5">
    <property type="protein sequence ID" value="ENSRNOP00000003615.3"/>
    <property type="gene ID" value="ENSRNOG00000002664.5"/>
</dbReference>
<dbReference type="GeneID" id="360468"/>
<dbReference type="KEGG" id="rno:360468"/>
<dbReference type="UCSC" id="RGD:1359629">
    <property type="organism name" value="rat"/>
</dbReference>
<dbReference type="AGR" id="RGD:1359629"/>
<dbReference type="CTD" id="2013"/>
<dbReference type="RGD" id="1359629">
    <property type="gene designation" value="Emp2"/>
</dbReference>
<dbReference type="eggNOG" id="ENOG502RYYE">
    <property type="taxonomic scope" value="Eukaryota"/>
</dbReference>
<dbReference type="GeneTree" id="ENSGT00950000182696"/>
<dbReference type="HOGENOM" id="CLU_138632_0_0_1"/>
<dbReference type="InParanoid" id="Q66HH2"/>
<dbReference type="OMA" id="VAWVSFP"/>
<dbReference type="OrthoDB" id="9939098at2759"/>
<dbReference type="PhylomeDB" id="Q66HH2"/>
<dbReference type="TreeFam" id="TF330414"/>
<dbReference type="PRO" id="PR:Q66HH2"/>
<dbReference type="Proteomes" id="UP000002494">
    <property type="component" value="Chromosome 10"/>
</dbReference>
<dbReference type="Proteomes" id="UP000234681">
    <property type="component" value="Chromosome 10"/>
</dbReference>
<dbReference type="Bgee" id="ENSRNOG00000002664">
    <property type="expression patterns" value="Expressed in lung and 18 other cell types or tissues"/>
</dbReference>
<dbReference type="GO" id="GO:0045177">
    <property type="term" value="C:apical part of cell"/>
    <property type="evidence" value="ECO:0000250"/>
    <property type="project" value="UniProtKB"/>
</dbReference>
<dbReference type="GO" id="GO:0016324">
    <property type="term" value="C:apical plasma membrane"/>
    <property type="evidence" value="ECO:0000250"/>
    <property type="project" value="UniProtKB"/>
</dbReference>
<dbReference type="GO" id="GO:0009986">
    <property type="term" value="C:cell surface"/>
    <property type="evidence" value="ECO:0000250"/>
    <property type="project" value="UniProtKB"/>
</dbReference>
<dbReference type="GO" id="GO:0005737">
    <property type="term" value="C:cytoplasm"/>
    <property type="evidence" value="ECO:0000314"/>
    <property type="project" value="UniProtKB"/>
</dbReference>
<dbReference type="GO" id="GO:0031410">
    <property type="term" value="C:cytoplasmic vesicle"/>
    <property type="evidence" value="ECO:0000266"/>
    <property type="project" value="RGD"/>
</dbReference>
<dbReference type="GO" id="GO:0005794">
    <property type="term" value="C:Golgi apparatus"/>
    <property type="evidence" value="ECO:0000250"/>
    <property type="project" value="UniProtKB"/>
</dbReference>
<dbReference type="GO" id="GO:0000139">
    <property type="term" value="C:Golgi membrane"/>
    <property type="evidence" value="ECO:0007669"/>
    <property type="project" value="UniProtKB-SubCell"/>
</dbReference>
<dbReference type="GO" id="GO:0045121">
    <property type="term" value="C:membrane raft"/>
    <property type="evidence" value="ECO:0000250"/>
    <property type="project" value="UniProtKB"/>
</dbReference>
<dbReference type="GO" id="GO:0005634">
    <property type="term" value="C:nucleus"/>
    <property type="evidence" value="ECO:0000314"/>
    <property type="project" value="UniProtKB"/>
</dbReference>
<dbReference type="GO" id="GO:0048471">
    <property type="term" value="C:perinuclear region of cytoplasm"/>
    <property type="evidence" value="ECO:0007669"/>
    <property type="project" value="UniProtKB-SubCell"/>
</dbReference>
<dbReference type="GO" id="GO:0005886">
    <property type="term" value="C:plasma membrane"/>
    <property type="evidence" value="ECO:0000250"/>
    <property type="project" value="UniProtKB"/>
</dbReference>
<dbReference type="GO" id="GO:0005178">
    <property type="term" value="F:integrin binding"/>
    <property type="evidence" value="ECO:0000266"/>
    <property type="project" value="RGD"/>
</dbReference>
<dbReference type="GO" id="GO:0019900">
    <property type="term" value="F:kinase binding"/>
    <property type="evidence" value="ECO:0000266"/>
    <property type="project" value="RGD"/>
</dbReference>
<dbReference type="GO" id="GO:0007015">
    <property type="term" value="P:actin filament organization"/>
    <property type="evidence" value="ECO:0000250"/>
    <property type="project" value="UniProtKB"/>
</dbReference>
<dbReference type="GO" id="GO:0070252">
    <property type="term" value="P:actin-mediated cell contraction"/>
    <property type="evidence" value="ECO:0000250"/>
    <property type="project" value="UniProtKB"/>
</dbReference>
<dbReference type="GO" id="GO:0006915">
    <property type="term" value="P:apoptotic process"/>
    <property type="evidence" value="ECO:0000250"/>
    <property type="project" value="UniProtKB"/>
</dbReference>
<dbReference type="GO" id="GO:0032060">
    <property type="term" value="P:bleb assembly"/>
    <property type="evidence" value="ECO:0000250"/>
    <property type="project" value="UniProtKB"/>
</dbReference>
<dbReference type="GO" id="GO:0043534">
    <property type="term" value="P:blood vessel endothelial cell migration"/>
    <property type="evidence" value="ECO:0000250"/>
    <property type="project" value="UniProtKB"/>
</dbReference>
<dbReference type="GO" id="GO:0007155">
    <property type="term" value="P:cell adhesion"/>
    <property type="evidence" value="ECO:0000250"/>
    <property type="project" value="UniProtKB"/>
</dbReference>
<dbReference type="GO" id="GO:0007160">
    <property type="term" value="P:cell-matrix adhesion"/>
    <property type="evidence" value="ECO:0000250"/>
    <property type="project" value="UniProtKB"/>
</dbReference>
<dbReference type="GO" id="GO:0045022">
    <property type="term" value="P:early endosome to late endosome transport"/>
    <property type="evidence" value="ECO:0000250"/>
    <property type="project" value="UniProtKB"/>
</dbReference>
<dbReference type="GO" id="GO:0007566">
    <property type="term" value="P:embryo implantation"/>
    <property type="evidence" value="ECO:0000250"/>
    <property type="project" value="UniProtKB"/>
</dbReference>
<dbReference type="GO" id="GO:0060136">
    <property type="term" value="P:embryonic process involved in female pregnancy"/>
    <property type="evidence" value="ECO:0000250"/>
    <property type="project" value="UniProtKB"/>
</dbReference>
<dbReference type="GO" id="GO:0060914">
    <property type="term" value="P:heart formation"/>
    <property type="evidence" value="ECO:0000250"/>
    <property type="project" value="UniProtKB"/>
</dbReference>
<dbReference type="GO" id="GO:0001765">
    <property type="term" value="P:membrane raft assembly"/>
    <property type="evidence" value="ECO:0000250"/>
    <property type="project" value="UniProtKB"/>
</dbReference>
<dbReference type="GO" id="GO:0001787">
    <property type="term" value="P:natural killer cell proliferation"/>
    <property type="evidence" value="ECO:0000250"/>
    <property type="project" value="UniProtKB"/>
</dbReference>
<dbReference type="GO" id="GO:1990266">
    <property type="term" value="P:neutrophil migration"/>
    <property type="evidence" value="ECO:0000250"/>
    <property type="project" value="UniProtKB"/>
</dbReference>
<dbReference type="GO" id="GO:0044854">
    <property type="term" value="P:plasma membrane raft assembly"/>
    <property type="evidence" value="ECO:0000250"/>
    <property type="project" value="UniProtKB"/>
</dbReference>
<dbReference type="GO" id="GO:0045766">
    <property type="term" value="P:positive regulation of angiogenesis"/>
    <property type="evidence" value="ECO:0000250"/>
    <property type="project" value="UniProtKB"/>
</dbReference>
<dbReference type="GO" id="GO:0062043">
    <property type="term" value="P:positive regulation of cardiac epithelial to mesenchymal transition"/>
    <property type="evidence" value="ECO:0000250"/>
    <property type="project" value="UniProtKB"/>
</dbReference>
<dbReference type="GO" id="GO:0008284">
    <property type="term" value="P:positive regulation of cell population proliferation"/>
    <property type="evidence" value="ECO:0000250"/>
    <property type="project" value="UniProtKB"/>
</dbReference>
<dbReference type="GO" id="GO:0001954">
    <property type="term" value="P:positive regulation of cell-matrix adhesion"/>
    <property type="evidence" value="ECO:0000266"/>
    <property type="project" value="RGD"/>
</dbReference>
<dbReference type="GO" id="GO:2001046">
    <property type="term" value="P:positive regulation of integrin-mediated signaling pathway"/>
    <property type="evidence" value="ECO:0000266"/>
    <property type="project" value="RGD"/>
</dbReference>
<dbReference type="GO" id="GO:0034394">
    <property type="term" value="P:protein localization to cell surface"/>
    <property type="evidence" value="ECO:0000250"/>
    <property type="project" value="UniProtKB"/>
</dbReference>
<dbReference type="GO" id="GO:0072659">
    <property type="term" value="P:protein localization to plasma membrane"/>
    <property type="evidence" value="ECO:0000250"/>
    <property type="project" value="UniProtKB"/>
</dbReference>
<dbReference type="GO" id="GO:0045765">
    <property type="term" value="P:regulation of angiogenesis"/>
    <property type="evidence" value="ECO:0000250"/>
    <property type="project" value="UniProtKB"/>
</dbReference>
<dbReference type="GO" id="GO:0001952">
    <property type="term" value="P:regulation of cell-matrix adhesion"/>
    <property type="evidence" value="ECO:0000266"/>
    <property type="project" value="RGD"/>
</dbReference>
<dbReference type="GO" id="GO:0010594">
    <property type="term" value="P:regulation of endothelial cell migration"/>
    <property type="evidence" value="ECO:0000250"/>
    <property type="project" value="UniProtKB"/>
</dbReference>
<dbReference type="GO" id="GO:0003093">
    <property type="term" value="P:regulation of glomerular filtration"/>
    <property type="evidence" value="ECO:0000250"/>
    <property type="project" value="UniProtKB"/>
</dbReference>
<dbReference type="GO" id="GO:0043549">
    <property type="term" value="P:regulation of kinase activity"/>
    <property type="evidence" value="ECO:0000250"/>
    <property type="project" value="UniProtKB"/>
</dbReference>
<dbReference type="GO" id="GO:2001212">
    <property type="term" value="P:regulation of vasculogenesis"/>
    <property type="evidence" value="ECO:0000250"/>
    <property type="project" value="UniProtKB"/>
</dbReference>
<dbReference type="GO" id="GO:0001913">
    <property type="term" value="P:T cell mediated cytotoxicity"/>
    <property type="evidence" value="ECO:0000250"/>
    <property type="project" value="UniProtKB"/>
</dbReference>
<dbReference type="FunFam" id="1.20.140.150:FF:000023">
    <property type="entry name" value="Epithelial membrane protein 2"/>
    <property type="match status" value="1"/>
</dbReference>
<dbReference type="Gene3D" id="1.20.140.150">
    <property type="match status" value="1"/>
</dbReference>
<dbReference type="InterPro" id="IPR003933">
    <property type="entry name" value="EMP-2"/>
</dbReference>
<dbReference type="InterPro" id="IPR050579">
    <property type="entry name" value="PMP-22/EMP/MP20-like"/>
</dbReference>
<dbReference type="InterPro" id="IPR004031">
    <property type="entry name" value="PMP22/EMP/MP20/Claudin"/>
</dbReference>
<dbReference type="InterPro" id="IPR004032">
    <property type="entry name" value="PMP22_EMP_MP20"/>
</dbReference>
<dbReference type="PANTHER" id="PTHR10671:SF32">
    <property type="entry name" value="EPITHELIAL MEMBRANE PROTEIN 2"/>
    <property type="match status" value="1"/>
</dbReference>
<dbReference type="PANTHER" id="PTHR10671">
    <property type="entry name" value="EPITHELIAL MEMBRANE PROTEIN-RELATED"/>
    <property type="match status" value="1"/>
</dbReference>
<dbReference type="Pfam" id="PF00822">
    <property type="entry name" value="PMP22_Claudin"/>
    <property type="match status" value="1"/>
</dbReference>
<dbReference type="PRINTS" id="PR01453">
    <property type="entry name" value="EPMEMFAMILY"/>
</dbReference>
<dbReference type="PRINTS" id="PR01455">
    <property type="entry name" value="EPMEMPROT2"/>
</dbReference>
<dbReference type="PROSITE" id="PS01221">
    <property type="entry name" value="PMP22_1"/>
    <property type="match status" value="1"/>
</dbReference>
<dbReference type="PROSITE" id="PS01222">
    <property type="entry name" value="PMP22_2"/>
    <property type="match status" value="1"/>
</dbReference>
<accession>Q66HH2</accession>
<reference key="1">
    <citation type="journal article" date="2004" name="Nature">
        <title>Genome sequence of the Brown Norway rat yields insights into mammalian evolution.</title>
        <authorList>
            <person name="Gibbs R.A."/>
            <person name="Weinstock G.M."/>
            <person name="Metzker M.L."/>
            <person name="Muzny D.M."/>
            <person name="Sodergren E.J."/>
            <person name="Scherer S."/>
            <person name="Scott G."/>
            <person name="Steffen D."/>
            <person name="Worley K.C."/>
            <person name="Burch P.E."/>
            <person name="Okwuonu G."/>
            <person name="Hines S."/>
            <person name="Lewis L."/>
            <person name="Deramo C."/>
            <person name="Delgado O."/>
            <person name="Dugan-Rocha S."/>
            <person name="Miner G."/>
            <person name="Morgan M."/>
            <person name="Hawes A."/>
            <person name="Gill R."/>
            <person name="Holt R.A."/>
            <person name="Adams M.D."/>
            <person name="Amanatides P.G."/>
            <person name="Baden-Tillson H."/>
            <person name="Barnstead M."/>
            <person name="Chin S."/>
            <person name="Evans C.A."/>
            <person name="Ferriera S."/>
            <person name="Fosler C."/>
            <person name="Glodek A."/>
            <person name="Gu Z."/>
            <person name="Jennings D."/>
            <person name="Kraft C.L."/>
            <person name="Nguyen T."/>
            <person name="Pfannkoch C.M."/>
            <person name="Sitter C."/>
            <person name="Sutton G.G."/>
            <person name="Venter J.C."/>
            <person name="Woodage T."/>
            <person name="Smith D."/>
            <person name="Lee H.-M."/>
            <person name="Gustafson E."/>
            <person name="Cahill P."/>
            <person name="Kana A."/>
            <person name="Doucette-Stamm L."/>
            <person name="Weinstock K."/>
            <person name="Fechtel K."/>
            <person name="Weiss R.B."/>
            <person name="Dunn D.M."/>
            <person name="Green E.D."/>
            <person name="Blakesley R.W."/>
            <person name="Bouffard G.G."/>
            <person name="De Jong P.J."/>
            <person name="Osoegawa K."/>
            <person name="Zhu B."/>
            <person name="Marra M."/>
            <person name="Schein J."/>
            <person name="Bosdet I."/>
            <person name="Fjell C."/>
            <person name="Jones S."/>
            <person name="Krzywinski M."/>
            <person name="Mathewson C."/>
            <person name="Siddiqui A."/>
            <person name="Wye N."/>
            <person name="McPherson J."/>
            <person name="Zhao S."/>
            <person name="Fraser C.M."/>
            <person name="Shetty J."/>
            <person name="Shatsman S."/>
            <person name="Geer K."/>
            <person name="Chen Y."/>
            <person name="Abramzon S."/>
            <person name="Nierman W.C."/>
            <person name="Havlak P.H."/>
            <person name="Chen R."/>
            <person name="Durbin K.J."/>
            <person name="Egan A."/>
            <person name="Ren Y."/>
            <person name="Song X.-Z."/>
            <person name="Li B."/>
            <person name="Liu Y."/>
            <person name="Qin X."/>
            <person name="Cawley S."/>
            <person name="Cooney A.J."/>
            <person name="D'Souza L.M."/>
            <person name="Martin K."/>
            <person name="Wu J.Q."/>
            <person name="Gonzalez-Garay M.L."/>
            <person name="Jackson A.R."/>
            <person name="Kalafus K.J."/>
            <person name="McLeod M.P."/>
            <person name="Milosavljevic A."/>
            <person name="Virk D."/>
            <person name="Volkov A."/>
            <person name="Wheeler D.A."/>
            <person name="Zhang Z."/>
            <person name="Bailey J.A."/>
            <person name="Eichler E.E."/>
            <person name="Tuzun E."/>
            <person name="Birney E."/>
            <person name="Mongin E."/>
            <person name="Ureta-Vidal A."/>
            <person name="Woodwark C."/>
            <person name="Zdobnov E."/>
            <person name="Bork P."/>
            <person name="Suyama M."/>
            <person name="Torrents D."/>
            <person name="Alexandersson M."/>
            <person name="Trask B.J."/>
            <person name="Young J.M."/>
            <person name="Huang H."/>
            <person name="Wang H."/>
            <person name="Xing H."/>
            <person name="Daniels S."/>
            <person name="Gietzen D."/>
            <person name="Schmidt J."/>
            <person name="Stevens K."/>
            <person name="Vitt U."/>
            <person name="Wingrove J."/>
            <person name="Camara F."/>
            <person name="Mar Alba M."/>
            <person name="Abril J.F."/>
            <person name="Guigo R."/>
            <person name="Smit A."/>
            <person name="Dubchak I."/>
            <person name="Rubin E.M."/>
            <person name="Couronne O."/>
            <person name="Poliakov A."/>
            <person name="Huebner N."/>
            <person name="Ganten D."/>
            <person name="Goesele C."/>
            <person name="Hummel O."/>
            <person name="Kreitler T."/>
            <person name="Lee Y.-A."/>
            <person name="Monti J."/>
            <person name="Schulz H."/>
            <person name="Zimdahl H."/>
            <person name="Himmelbauer H."/>
            <person name="Lehrach H."/>
            <person name="Jacob H.J."/>
            <person name="Bromberg S."/>
            <person name="Gullings-Handley J."/>
            <person name="Jensen-Seaman M.I."/>
            <person name="Kwitek A.E."/>
            <person name="Lazar J."/>
            <person name="Pasko D."/>
            <person name="Tonellato P.J."/>
            <person name="Twigger S."/>
            <person name="Ponting C.P."/>
            <person name="Duarte J.M."/>
            <person name="Rice S."/>
            <person name="Goodstadt L."/>
            <person name="Beatson S.A."/>
            <person name="Emes R.D."/>
            <person name="Winter E.E."/>
            <person name="Webber C."/>
            <person name="Brandt P."/>
            <person name="Nyakatura G."/>
            <person name="Adetobi M."/>
            <person name="Chiaromonte F."/>
            <person name="Elnitski L."/>
            <person name="Eswara P."/>
            <person name="Hardison R.C."/>
            <person name="Hou M."/>
            <person name="Kolbe D."/>
            <person name="Makova K."/>
            <person name="Miller W."/>
            <person name="Nekrutenko A."/>
            <person name="Riemer C."/>
            <person name="Schwartz S."/>
            <person name="Taylor J."/>
            <person name="Yang S."/>
            <person name="Zhang Y."/>
            <person name="Lindpaintner K."/>
            <person name="Andrews T.D."/>
            <person name="Caccamo M."/>
            <person name="Clamp M."/>
            <person name="Clarke L."/>
            <person name="Curwen V."/>
            <person name="Durbin R.M."/>
            <person name="Eyras E."/>
            <person name="Searle S.M."/>
            <person name="Cooper G.M."/>
            <person name="Batzoglou S."/>
            <person name="Brudno M."/>
            <person name="Sidow A."/>
            <person name="Stone E.A."/>
            <person name="Payseur B.A."/>
            <person name="Bourque G."/>
            <person name="Lopez-Otin C."/>
            <person name="Puente X.S."/>
            <person name="Chakrabarti K."/>
            <person name="Chatterji S."/>
            <person name="Dewey C."/>
            <person name="Pachter L."/>
            <person name="Bray N."/>
            <person name="Yap V.B."/>
            <person name="Caspi A."/>
            <person name="Tesler G."/>
            <person name="Pevzner P.A."/>
            <person name="Haussler D."/>
            <person name="Roskin K.M."/>
            <person name="Baertsch R."/>
            <person name="Clawson H."/>
            <person name="Furey T.S."/>
            <person name="Hinrichs A.S."/>
            <person name="Karolchik D."/>
            <person name="Kent W.J."/>
            <person name="Rosenbloom K.R."/>
            <person name="Trumbower H."/>
            <person name="Weirauch M."/>
            <person name="Cooper D.N."/>
            <person name="Stenson P.D."/>
            <person name="Ma B."/>
            <person name="Brent M."/>
            <person name="Arumugam M."/>
            <person name="Shteynberg D."/>
            <person name="Copley R.R."/>
            <person name="Taylor M.S."/>
            <person name="Riethman H."/>
            <person name="Mudunuri U."/>
            <person name="Peterson J."/>
            <person name="Guyer M."/>
            <person name="Felsenfeld A."/>
            <person name="Old S."/>
            <person name="Mockrin S."/>
            <person name="Collins F.S."/>
        </authorList>
    </citation>
    <scope>NUCLEOTIDE SEQUENCE [LARGE SCALE GENOMIC DNA]</scope>
    <source>
        <strain>Brown Norway</strain>
    </source>
</reference>
<reference key="2">
    <citation type="submission" date="2005-07" db="EMBL/GenBank/DDBJ databases">
        <authorList>
            <person name="Mural R.J."/>
            <person name="Adams M.D."/>
            <person name="Myers E.W."/>
            <person name="Smith H.O."/>
            <person name="Venter J.C."/>
        </authorList>
    </citation>
    <scope>NUCLEOTIDE SEQUENCE [LARGE SCALE GENOMIC DNA]</scope>
    <source>
        <strain>Brown Norway</strain>
    </source>
</reference>
<reference key="3">
    <citation type="journal article" date="2004" name="Genome Res.">
        <title>The status, quality, and expansion of the NIH full-length cDNA project: the Mammalian Gene Collection (MGC).</title>
        <authorList>
            <consortium name="The MGC Project Team"/>
        </authorList>
    </citation>
    <scope>NUCLEOTIDE SEQUENCE [LARGE SCALE MRNA]</scope>
    <source>
        <tissue>Lung</tissue>
    </source>
</reference>
<reference key="4">
    <citation type="journal article" date="2014" name="Am. J. Hum. Genet.">
        <title>Mutations in EMP2 cause childhood-onset nephrotic syndrome.</title>
        <authorList>
            <person name="Gee H.Y."/>
            <person name="Ashraf S."/>
            <person name="Wan X."/>
            <person name="Vega-Warner V."/>
            <person name="Esteve-Rudd J."/>
            <person name="Lovric S."/>
            <person name="Fang H."/>
            <person name="Hurd T.W."/>
            <person name="Sadowski C.E."/>
            <person name="Allen S.J."/>
            <person name="Otto E.A."/>
            <person name="Korkmaz E."/>
            <person name="Washburn J."/>
            <person name="Levy S."/>
            <person name="Williams D.S."/>
            <person name="Bakkaloglu S.A."/>
            <person name="Zolotnitskaya A."/>
            <person name="Ozaltin F."/>
            <person name="Zhou W."/>
            <person name="Hildebrandt F."/>
        </authorList>
    </citation>
    <scope>TISSUE SPECIFICITY</scope>
    <scope>SUBCELLULAR LOCATION</scope>
</reference>
<feature type="chain" id="PRO_0000430724" description="Epithelial membrane protein 2">
    <location>
        <begin position="1"/>
        <end position="172"/>
    </location>
</feature>
<feature type="transmembrane region" description="Helical; Name=1" evidence="4">
    <location>
        <begin position="1"/>
        <end position="21"/>
    </location>
</feature>
<feature type="transmembrane region" description="Helical; Name=2" evidence="4">
    <location>
        <begin position="72"/>
        <end position="92"/>
    </location>
</feature>
<feature type="transmembrane region" description="Helical; Name=3" evidence="4">
    <location>
        <begin position="100"/>
        <end position="120"/>
    </location>
</feature>
<feature type="transmembrane region" description="Helical; Name=4" evidence="4">
    <location>
        <begin position="148"/>
        <end position="168"/>
    </location>
</feature>
<organism evidence="7">
    <name type="scientific">Rattus norvegicus</name>
    <name type="common">Rat</name>
    <dbReference type="NCBI Taxonomy" id="10116"/>
    <lineage>
        <taxon>Eukaryota</taxon>
        <taxon>Metazoa</taxon>
        <taxon>Chordata</taxon>
        <taxon>Craniata</taxon>
        <taxon>Vertebrata</taxon>
        <taxon>Euteleostomi</taxon>
        <taxon>Mammalia</taxon>
        <taxon>Eutheria</taxon>
        <taxon>Euarchontoglires</taxon>
        <taxon>Glires</taxon>
        <taxon>Rodentia</taxon>
        <taxon>Myomorpha</taxon>
        <taxon>Muroidea</taxon>
        <taxon>Muridae</taxon>
        <taxon>Murinae</taxon>
        <taxon>Rattus</taxon>
    </lineage>
</organism>
<name>EMP2_RAT</name>